<name>MUTL_XYLFA</name>
<proteinExistence type="inferred from homology"/>
<organism>
    <name type="scientific">Xylella fastidiosa (strain 9a5c)</name>
    <dbReference type="NCBI Taxonomy" id="160492"/>
    <lineage>
        <taxon>Bacteria</taxon>
        <taxon>Pseudomonadati</taxon>
        <taxon>Pseudomonadota</taxon>
        <taxon>Gammaproteobacteria</taxon>
        <taxon>Lysobacterales</taxon>
        <taxon>Lysobacteraceae</taxon>
        <taxon>Xylella</taxon>
    </lineage>
</organism>
<evidence type="ECO:0000255" key="1">
    <source>
        <dbReference type="HAMAP-Rule" id="MF_00149"/>
    </source>
</evidence>
<accession>Q9PFB8</accession>
<sequence>MPIRQLPEILINQIAAGEVVQRPASVVKELVENAIDAGATRVDIELEAAGGRLIRIRDNGHGMAAQELPLAVLRHATSKIASLDDLEAVATLGFRGEALPSIVSVSRFTLMSRRAMDEHGAVLQIEGGTLGEVIPHAHAPGTTVEVRDLFYNVPARRKFLRAERTELGHIEEWARSLALAHPDLELRLSHNGKLSRRYKPGDWYSDARLIEILGEDFAHQALRVDHSGAGLRLHGCIVQPHYSRSNTDQQYLYVNGRAVRDRSVAHAVKQAYSDVLYQGRHPAYVLFLELDPARVDVNVHPAKQEVRFRDARLIHDFVYRTVQGTLAQTRAGTPPLAVGAGDVGGEGARPPVRHAVSFSGRRGGASHVLGSYSASTAPLMQSAPSVSVADAPAAYAALYAAPPTQVIDAVPQMQTGLPLAAGAGDVPPLGYAIAQLHGIYILAECADGLIVVDMHAAHERIGYERLKRAHDGIGLRTQPLLVPMTLMVAEREADVAECEAETLASLGFEVTRSGPGSLQVRSIPALLAQAEPEILLRDVLSDLSEHGHTRRVAEARDTLLATMACHGAVRAQRRLSISEMNALLRDMEATERSGQCNHGRPTWARFSLAEIDRWFLRGR</sequence>
<reference key="1">
    <citation type="journal article" date="2000" name="Nature">
        <title>The genome sequence of the plant pathogen Xylella fastidiosa.</title>
        <authorList>
            <person name="Simpson A.J.G."/>
            <person name="Reinach F.C."/>
            <person name="Arruda P."/>
            <person name="Abreu F.A."/>
            <person name="Acencio M."/>
            <person name="Alvarenga R."/>
            <person name="Alves L.M.C."/>
            <person name="Araya J.E."/>
            <person name="Baia G.S."/>
            <person name="Baptista C.S."/>
            <person name="Barros M.H."/>
            <person name="Bonaccorsi E.D."/>
            <person name="Bordin S."/>
            <person name="Bove J.M."/>
            <person name="Briones M.R.S."/>
            <person name="Bueno M.R.P."/>
            <person name="Camargo A.A."/>
            <person name="Camargo L.E.A."/>
            <person name="Carraro D.M."/>
            <person name="Carrer H."/>
            <person name="Colauto N.B."/>
            <person name="Colombo C."/>
            <person name="Costa F.F."/>
            <person name="Costa M.C.R."/>
            <person name="Costa-Neto C.M."/>
            <person name="Coutinho L.L."/>
            <person name="Cristofani M."/>
            <person name="Dias-Neto E."/>
            <person name="Docena C."/>
            <person name="El-Dorry H."/>
            <person name="Facincani A.P."/>
            <person name="Ferreira A.J.S."/>
            <person name="Ferreira V.C.A."/>
            <person name="Ferro J.A."/>
            <person name="Fraga J.S."/>
            <person name="Franca S.C."/>
            <person name="Franco M.C."/>
            <person name="Frohme M."/>
            <person name="Furlan L.R."/>
            <person name="Garnier M."/>
            <person name="Goldman G.H."/>
            <person name="Goldman M.H.S."/>
            <person name="Gomes S.L."/>
            <person name="Gruber A."/>
            <person name="Ho P.L."/>
            <person name="Hoheisel J.D."/>
            <person name="Junqueira M.L."/>
            <person name="Kemper E.L."/>
            <person name="Kitajima J.P."/>
            <person name="Krieger J.E."/>
            <person name="Kuramae E.E."/>
            <person name="Laigret F."/>
            <person name="Lambais M.R."/>
            <person name="Leite L.C.C."/>
            <person name="Lemos E.G.M."/>
            <person name="Lemos M.V.F."/>
            <person name="Lopes S.A."/>
            <person name="Lopes C.R."/>
            <person name="Machado J.A."/>
            <person name="Machado M.A."/>
            <person name="Madeira A.M.B.N."/>
            <person name="Madeira H.M.F."/>
            <person name="Marino C.L."/>
            <person name="Marques M.V."/>
            <person name="Martins E.A.L."/>
            <person name="Martins E.M.F."/>
            <person name="Matsukuma A.Y."/>
            <person name="Menck C.F.M."/>
            <person name="Miracca E.C."/>
            <person name="Miyaki C.Y."/>
            <person name="Monteiro-Vitorello C.B."/>
            <person name="Moon D.H."/>
            <person name="Nagai M.A."/>
            <person name="Nascimento A.L.T.O."/>
            <person name="Netto L.E.S."/>
            <person name="Nhani A. Jr."/>
            <person name="Nobrega F.G."/>
            <person name="Nunes L.R."/>
            <person name="Oliveira M.A."/>
            <person name="de Oliveira M.C."/>
            <person name="de Oliveira R.C."/>
            <person name="Palmieri D.A."/>
            <person name="Paris A."/>
            <person name="Peixoto B.R."/>
            <person name="Pereira G.A.G."/>
            <person name="Pereira H.A. Jr."/>
            <person name="Pesquero J.B."/>
            <person name="Quaggio R.B."/>
            <person name="Roberto P.G."/>
            <person name="Rodrigues V."/>
            <person name="de Rosa A.J.M."/>
            <person name="de Rosa V.E. Jr."/>
            <person name="de Sa R.G."/>
            <person name="Santelli R.V."/>
            <person name="Sawasaki H.E."/>
            <person name="da Silva A.C.R."/>
            <person name="da Silva A.M."/>
            <person name="da Silva F.R."/>
            <person name="Silva W.A. Jr."/>
            <person name="da Silveira J.F."/>
            <person name="Silvestri M.L.Z."/>
            <person name="Siqueira W.J."/>
            <person name="de Souza A.A."/>
            <person name="de Souza A.P."/>
            <person name="Terenzi M.F."/>
            <person name="Truffi D."/>
            <person name="Tsai S.M."/>
            <person name="Tsuhako M.H."/>
            <person name="Vallada H."/>
            <person name="Van Sluys M.A."/>
            <person name="Verjovski-Almeida S."/>
            <person name="Vettore A.L."/>
            <person name="Zago M.A."/>
            <person name="Zatz M."/>
            <person name="Meidanis J."/>
            <person name="Setubal J.C."/>
        </authorList>
    </citation>
    <scope>NUCLEOTIDE SEQUENCE [LARGE SCALE GENOMIC DNA]</scope>
    <source>
        <strain>9a5c</strain>
    </source>
</reference>
<dbReference type="EMBL" id="AE003849">
    <property type="protein sequence ID" value="AAF83570.1"/>
    <property type="molecule type" value="Genomic_DNA"/>
</dbReference>
<dbReference type="PIR" id="E82765">
    <property type="entry name" value="E82765"/>
</dbReference>
<dbReference type="RefSeq" id="WP_010893283.1">
    <property type="nucleotide sequence ID" value="NC_002488.3"/>
</dbReference>
<dbReference type="SMR" id="Q9PFB8"/>
<dbReference type="STRING" id="160492.XF_0760"/>
<dbReference type="KEGG" id="xfa:XF_0760"/>
<dbReference type="PATRIC" id="fig|160492.11.peg.800"/>
<dbReference type="eggNOG" id="COG0323">
    <property type="taxonomic scope" value="Bacteria"/>
</dbReference>
<dbReference type="HOGENOM" id="CLU_004131_4_2_6"/>
<dbReference type="Proteomes" id="UP000000812">
    <property type="component" value="Chromosome"/>
</dbReference>
<dbReference type="GO" id="GO:0032300">
    <property type="term" value="C:mismatch repair complex"/>
    <property type="evidence" value="ECO:0007669"/>
    <property type="project" value="InterPro"/>
</dbReference>
<dbReference type="GO" id="GO:0005524">
    <property type="term" value="F:ATP binding"/>
    <property type="evidence" value="ECO:0007669"/>
    <property type="project" value="InterPro"/>
</dbReference>
<dbReference type="GO" id="GO:0016887">
    <property type="term" value="F:ATP hydrolysis activity"/>
    <property type="evidence" value="ECO:0007669"/>
    <property type="project" value="InterPro"/>
</dbReference>
<dbReference type="GO" id="GO:0140664">
    <property type="term" value="F:ATP-dependent DNA damage sensor activity"/>
    <property type="evidence" value="ECO:0007669"/>
    <property type="project" value="InterPro"/>
</dbReference>
<dbReference type="GO" id="GO:0030983">
    <property type="term" value="F:mismatched DNA binding"/>
    <property type="evidence" value="ECO:0007669"/>
    <property type="project" value="InterPro"/>
</dbReference>
<dbReference type="GO" id="GO:0006298">
    <property type="term" value="P:mismatch repair"/>
    <property type="evidence" value="ECO:0007669"/>
    <property type="project" value="UniProtKB-UniRule"/>
</dbReference>
<dbReference type="CDD" id="cd16926">
    <property type="entry name" value="HATPase_MutL-MLH-PMS-like"/>
    <property type="match status" value="1"/>
</dbReference>
<dbReference type="CDD" id="cd03482">
    <property type="entry name" value="MutL_Trans_MutL"/>
    <property type="match status" value="1"/>
</dbReference>
<dbReference type="FunFam" id="3.30.230.10:FF:000013">
    <property type="entry name" value="DNA mismatch repair endonuclease MutL"/>
    <property type="match status" value="1"/>
</dbReference>
<dbReference type="FunFam" id="3.30.565.10:FF:000003">
    <property type="entry name" value="DNA mismatch repair endonuclease MutL"/>
    <property type="match status" value="1"/>
</dbReference>
<dbReference type="Gene3D" id="3.30.230.10">
    <property type="match status" value="1"/>
</dbReference>
<dbReference type="Gene3D" id="3.30.565.10">
    <property type="entry name" value="Histidine kinase-like ATPase, C-terminal domain"/>
    <property type="match status" value="1"/>
</dbReference>
<dbReference type="Gene3D" id="3.30.1540.20">
    <property type="entry name" value="MutL, C-terminal domain, dimerisation subdomain"/>
    <property type="match status" value="1"/>
</dbReference>
<dbReference type="Gene3D" id="3.30.1370.100">
    <property type="entry name" value="MutL, C-terminal domain, regulatory subdomain"/>
    <property type="match status" value="1"/>
</dbReference>
<dbReference type="HAMAP" id="MF_00149">
    <property type="entry name" value="DNA_mis_repair"/>
    <property type="match status" value="1"/>
</dbReference>
<dbReference type="InterPro" id="IPR014762">
    <property type="entry name" value="DNA_mismatch_repair_CS"/>
</dbReference>
<dbReference type="InterPro" id="IPR020667">
    <property type="entry name" value="DNA_mismatch_repair_MutL"/>
</dbReference>
<dbReference type="InterPro" id="IPR013507">
    <property type="entry name" value="DNA_mismatch_S5_2-like"/>
</dbReference>
<dbReference type="InterPro" id="IPR036890">
    <property type="entry name" value="HATPase_C_sf"/>
</dbReference>
<dbReference type="InterPro" id="IPR002099">
    <property type="entry name" value="MutL/Mlh/PMS"/>
</dbReference>
<dbReference type="InterPro" id="IPR038973">
    <property type="entry name" value="MutL/Mlh/Pms-like"/>
</dbReference>
<dbReference type="InterPro" id="IPR014790">
    <property type="entry name" value="MutL_C"/>
</dbReference>
<dbReference type="InterPro" id="IPR042120">
    <property type="entry name" value="MutL_C_dimsub"/>
</dbReference>
<dbReference type="InterPro" id="IPR042121">
    <property type="entry name" value="MutL_C_regsub"/>
</dbReference>
<dbReference type="InterPro" id="IPR037198">
    <property type="entry name" value="MutL_C_sf"/>
</dbReference>
<dbReference type="InterPro" id="IPR020568">
    <property type="entry name" value="Ribosomal_Su5_D2-typ_SF"/>
</dbReference>
<dbReference type="InterPro" id="IPR014721">
    <property type="entry name" value="Ribsml_uS5_D2-typ_fold_subgr"/>
</dbReference>
<dbReference type="NCBIfam" id="TIGR00585">
    <property type="entry name" value="mutl"/>
    <property type="match status" value="1"/>
</dbReference>
<dbReference type="NCBIfam" id="NF000949">
    <property type="entry name" value="PRK00095.1-2"/>
    <property type="match status" value="1"/>
</dbReference>
<dbReference type="PANTHER" id="PTHR10073">
    <property type="entry name" value="DNA MISMATCH REPAIR PROTEIN MLH, PMS, MUTL"/>
    <property type="match status" value="1"/>
</dbReference>
<dbReference type="PANTHER" id="PTHR10073:SF12">
    <property type="entry name" value="DNA MISMATCH REPAIR PROTEIN MLH1"/>
    <property type="match status" value="1"/>
</dbReference>
<dbReference type="Pfam" id="PF01119">
    <property type="entry name" value="DNA_mis_repair"/>
    <property type="match status" value="1"/>
</dbReference>
<dbReference type="Pfam" id="PF13589">
    <property type="entry name" value="HATPase_c_3"/>
    <property type="match status" value="1"/>
</dbReference>
<dbReference type="Pfam" id="PF08676">
    <property type="entry name" value="MutL_C"/>
    <property type="match status" value="1"/>
</dbReference>
<dbReference type="SMART" id="SM01340">
    <property type="entry name" value="DNA_mis_repair"/>
    <property type="match status" value="1"/>
</dbReference>
<dbReference type="SMART" id="SM00853">
    <property type="entry name" value="MutL_C"/>
    <property type="match status" value="1"/>
</dbReference>
<dbReference type="SUPFAM" id="SSF55874">
    <property type="entry name" value="ATPase domain of HSP90 chaperone/DNA topoisomerase II/histidine kinase"/>
    <property type="match status" value="1"/>
</dbReference>
<dbReference type="SUPFAM" id="SSF118116">
    <property type="entry name" value="DNA mismatch repair protein MutL"/>
    <property type="match status" value="1"/>
</dbReference>
<dbReference type="SUPFAM" id="SSF54211">
    <property type="entry name" value="Ribosomal protein S5 domain 2-like"/>
    <property type="match status" value="1"/>
</dbReference>
<dbReference type="PROSITE" id="PS00058">
    <property type="entry name" value="DNA_MISMATCH_REPAIR_1"/>
    <property type="match status" value="1"/>
</dbReference>
<feature type="chain" id="PRO_0000177996" description="DNA mismatch repair protein MutL">
    <location>
        <begin position="1"/>
        <end position="619"/>
    </location>
</feature>
<protein>
    <recommendedName>
        <fullName evidence="1">DNA mismatch repair protein MutL</fullName>
    </recommendedName>
</protein>
<keyword id="KW-0227">DNA damage</keyword>
<keyword id="KW-0234">DNA repair</keyword>
<comment type="function">
    <text evidence="1">This protein is involved in the repair of mismatches in DNA. It is required for dam-dependent methyl-directed DNA mismatch repair. May act as a 'molecular matchmaker', a protein that promotes the formation of a stable complex between two or more DNA-binding proteins in an ATP-dependent manner without itself being part of a final effector complex.</text>
</comment>
<comment type="similarity">
    <text evidence="1">Belongs to the DNA mismatch repair MutL/HexB family.</text>
</comment>
<gene>
    <name evidence="1" type="primary">mutL</name>
    <name type="ordered locus">XF_0760</name>
</gene>